<name>KA261_OLIMR</name>
<proteinExistence type="evidence at transcript level"/>
<keyword id="KW-1015">Disulfide bond</keyword>
<keyword id="KW-0872">Ion channel impairing toxin</keyword>
<keyword id="KW-0528">Neurotoxin</keyword>
<keyword id="KW-0632">Potassium channel impairing toxin</keyword>
<keyword id="KW-0964">Secreted</keyword>
<keyword id="KW-0732">Signal</keyword>
<keyword id="KW-0800">Toxin</keyword>
<keyword id="KW-1220">Voltage-gated potassium channel impairing toxin</keyword>
<accession>A7KJJ7</accession>
<protein>
    <recommendedName>
        <fullName evidence="5">Potassium channel toxin alpha-KTx 26.1</fullName>
    </recommendedName>
    <alternativeName>
        <fullName evidence="5">Neurotoxin BmK86</fullName>
    </alternativeName>
</protein>
<comment type="function">
    <text evidence="3 4">Recombinant toxin that reversibly inhibits the potassium current of mKv1.3/KCNA3 channel stably expressed in COS7 cells (IC(50)=150 nM) (PubMed:17624312). Also shows a weak inhibition on Kv1.2/KCNA2, Kv1.3/KCNA3 and TRPV1 channels (PubMed:29483648).</text>
</comment>
<comment type="subcellular location">
    <subcellularLocation>
        <location evidence="7">Secreted</location>
    </subcellularLocation>
</comment>
<comment type="tissue specificity">
    <text evidence="7">Expressed by the venom gland.</text>
</comment>
<comment type="domain">
    <text evidence="1">Has the structural arrangement of an alpha-helix connected to a beta-sheet by disulfide bonds (CSalpha/beta).</text>
</comment>
<comment type="miscellaneous">
    <text evidence="3">Negative results: does not inhibit large conductance calcium-activated potassium channels (BK).</text>
</comment>
<comment type="similarity">
    <text evidence="6">Belongs to the short scorpion toxin superfamily. Potassium channel inhibitor family. Alpha-KTx 26 subfamily.</text>
</comment>
<organism>
    <name type="scientific">Olivierus martensii</name>
    <name type="common">Manchurian scorpion</name>
    <name type="synonym">Mesobuthus martensii</name>
    <dbReference type="NCBI Taxonomy" id="34649"/>
    <lineage>
        <taxon>Eukaryota</taxon>
        <taxon>Metazoa</taxon>
        <taxon>Ecdysozoa</taxon>
        <taxon>Arthropoda</taxon>
        <taxon>Chelicerata</taxon>
        <taxon>Arachnida</taxon>
        <taxon>Scorpiones</taxon>
        <taxon>Buthida</taxon>
        <taxon>Buthoidea</taxon>
        <taxon>Buthidae</taxon>
        <taxon>Olivierus</taxon>
    </lineage>
</organism>
<dbReference type="EMBL" id="EF457939">
    <property type="protein sequence ID" value="ABR14604.1"/>
    <property type="molecule type" value="mRNA"/>
</dbReference>
<dbReference type="SMR" id="A7KJJ7"/>
<dbReference type="EvolutionaryTrace" id="A7KJJ7"/>
<dbReference type="GO" id="GO:0005576">
    <property type="term" value="C:extracellular region"/>
    <property type="evidence" value="ECO:0007669"/>
    <property type="project" value="UniProtKB-SubCell"/>
</dbReference>
<dbReference type="GO" id="GO:0008200">
    <property type="term" value="F:ion channel inhibitor activity"/>
    <property type="evidence" value="ECO:0007669"/>
    <property type="project" value="InterPro"/>
</dbReference>
<dbReference type="GO" id="GO:0015459">
    <property type="term" value="F:potassium channel regulator activity"/>
    <property type="evidence" value="ECO:0007669"/>
    <property type="project" value="UniProtKB-KW"/>
</dbReference>
<dbReference type="GO" id="GO:0090729">
    <property type="term" value="F:toxin activity"/>
    <property type="evidence" value="ECO:0007669"/>
    <property type="project" value="UniProtKB-KW"/>
</dbReference>
<dbReference type="Gene3D" id="3.30.30.10">
    <property type="entry name" value="Knottin, scorpion toxin-like"/>
    <property type="match status" value="1"/>
</dbReference>
<dbReference type="InterPro" id="IPR036574">
    <property type="entry name" value="Scorpion_toxin-like_sf"/>
</dbReference>
<dbReference type="InterPro" id="IPR001947">
    <property type="entry name" value="Scorpion_toxinS_K_inh"/>
</dbReference>
<dbReference type="Pfam" id="PF00451">
    <property type="entry name" value="Toxin_2"/>
    <property type="match status" value="1"/>
</dbReference>
<dbReference type="SUPFAM" id="SSF57095">
    <property type="entry name" value="Scorpion toxin-like"/>
    <property type="match status" value="1"/>
</dbReference>
<dbReference type="PROSITE" id="PS01138">
    <property type="entry name" value="SCORP_SHORT_TOXIN"/>
    <property type="match status" value="1"/>
</dbReference>
<sequence>MSRLFVFILIALFLSAIIDVMSNFKVEGACSKPCRKYCIDKGARNGKCINGRCHCYY</sequence>
<evidence type="ECO:0000250" key="1">
    <source>
        <dbReference type="UniProtKB" id="P0DL65"/>
    </source>
</evidence>
<evidence type="ECO:0000255" key="2"/>
<evidence type="ECO:0000269" key="3">
    <source>
    </source>
</evidence>
<evidence type="ECO:0000269" key="4">
    <source>
    </source>
</evidence>
<evidence type="ECO:0000303" key="5">
    <source>
    </source>
</evidence>
<evidence type="ECO:0000305" key="6"/>
<evidence type="ECO:0000305" key="7">
    <source>
    </source>
</evidence>
<feature type="signal peptide" evidence="2">
    <location>
        <begin position="1"/>
        <end position="22"/>
    </location>
</feature>
<feature type="chain" id="PRO_0000403831" description="Potassium channel toxin alpha-KTx 26.1">
    <location>
        <begin position="23"/>
        <end position="57"/>
    </location>
</feature>
<feature type="site" description="Basic residue of the functional dyad" evidence="6">
    <location>
        <position position="47"/>
    </location>
</feature>
<feature type="site" description="Aromatic residue of the functional dyad" evidence="6">
    <location>
        <position position="56"/>
    </location>
</feature>
<feature type="disulfide bond" evidence="1">
    <location>
        <begin position="30"/>
        <end position="48"/>
    </location>
</feature>
<feature type="disulfide bond" evidence="1">
    <location>
        <begin position="34"/>
        <end position="53"/>
    </location>
</feature>
<feature type="disulfide bond" evidence="1">
    <location>
        <begin position="38"/>
        <end position="55"/>
    </location>
</feature>
<reference key="1">
    <citation type="journal article" date="2007" name="Biochem. Biophys. Res. Commun.">
        <title>Cloning and characterization of BmK86, a novel K(+)-channel blocker from scorpion venom.</title>
        <authorList>
            <person name="Mao X."/>
            <person name="Cao Z.-J."/>
            <person name="Yin S.-J."/>
            <person name="Ma Y."/>
            <person name="Wu Y.-L."/>
            <person name="Li W.-X."/>
        </authorList>
    </citation>
    <scope>NUCLEOTIDE SEQUENCE [MRNA]</scope>
    <scope>FUNCTION</scope>
    <scope>TISSUE SPECIFICITY</scope>
    <source>
        <tissue>Venom gland</tissue>
    </source>
</reference>
<reference key="2">
    <citation type="journal article" date="2018" name="Nat. Struct. Mol. Biol.">
        <title>Screening, large-scale production and structure-based classification of cystine-dense peptides.</title>
        <authorList>
            <person name="Correnti C.E."/>
            <person name="Gewe M.M."/>
            <person name="Mehlin C."/>
            <person name="Bandaranayake A.D."/>
            <person name="Johnsen W.A."/>
            <person name="Rupert P.B."/>
            <person name="Brusniak M.Y."/>
            <person name="Clarke M."/>
            <person name="Burke S.E."/>
            <person name="De Van Der Schueren W."/>
            <person name="Pilat K."/>
            <person name="Turnbaugh S.M."/>
            <person name="May D."/>
            <person name="Watson A."/>
            <person name="Chan M.K."/>
            <person name="Bahl C.D."/>
            <person name="Olson J.M."/>
            <person name="Strong R.K."/>
        </authorList>
    </citation>
    <scope>FUNCTION</scope>
    <scope>SYNTHESIS OF 23-57</scope>
</reference>